<sequence>MAEFIRAQIFGTTFEITSRYSDLQPVGMGAFGLVCSAKDQLTNQNVAIKKIMKPFSTPVLAKRTYRELKLLKHLRHENVISLSDIFISPLEDIYFVTELLGTDLHRLLTSRPLEKQFIQYFLYQIMRGLKYVHSAGVVHRDLKPSNILVNENCDLKICDFGLARIQDPQMTGYVSTRYYRAPEIMLTWQKYDVEVDIWSAGCIFAEMLEGKPLFPGKDHVNQFSIITELLGTPPDDVINTIASENTLRFVKSLPKRERQPLKNKFKNADSSAVDLLERMLVFDPKKRITATEALSHEYLAPYHDPTDEPVAEEKFDWSFNDADLPVDTWKIMMYSEILDYHNVEASGQMMFQEDVPPQ</sequence>
<dbReference type="EC" id="2.7.11.24" evidence="2"/>
<dbReference type="EMBL" id="AF297031">
    <property type="protein sequence ID" value="AAK83124.1"/>
    <property type="molecule type" value="mRNA"/>
</dbReference>
<dbReference type="EMBL" id="AF297032">
    <property type="protein sequence ID" value="AAK83125.1"/>
    <property type="molecule type" value="Genomic_DNA"/>
</dbReference>
<dbReference type="EMBL" id="CM002239">
    <property type="protein sequence ID" value="EAA32927.2"/>
    <property type="molecule type" value="Genomic_DNA"/>
</dbReference>
<dbReference type="RefSeq" id="XP_962163.2">
    <property type="nucleotide sequence ID" value="XM_957070.3"/>
</dbReference>
<dbReference type="SMR" id="Q96TL5"/>
<dbReference type="FunCoup" id="Q96TL5">
    <property type="interactions" value="550"/>
</dbReference>
<dbReference type="STRING" id="367110.Q96TL5"/>
<dbReference type="PaxDb" id="5141-EFNCRP00000007026"/>
<dbReference type="EnsemblFungi" id="EAA32927">
    <property type="protein sequence ID" value="EAA32927"/>
    <property type="gene ID" value="NCU07024"/>
</dbReference>
<dbReference type="GeneID" id="3878327"/>
<dbReference type="KEGG" id="ncr:NCU07024"/>
<dbReference type="VEuPathDB" id="FungiDB:NCU07024"/>
<dbReference type="HOGENOM" id="CLU_000288_181_1_1"/>
<dbReference type="InParanoid" id="Q96TL5"/>
<dbReference type="OMA" id="NRYTDLN"/>
<dbReference type="OrthoDB" id="192887at2759"/>
<dbReference type="Proteomes" id="UP000001805">
    <property type="component" value="Chromosome 4, Linkage Group IV"/>
</dbReference>
<dbReference type="GO" id="GO:0005737">
    <property type="term" value="C:cytoplasm"/>
    <property type="evidence" value="ECO:0000318"/>
    <property type="project" value="GO_Central"/>
</dbReference>
<dbReference type="GO" id="GO:0005634">
    <property type="term" value="C:nucleus"/>
    <property type="evidence" value="ECO:0000318"/>
    <property type="project" value="GO_Central"/>
</dbReference>
<dbReference type="GO" id="GO:0005524">
    <property type="term" value="F:ATP binding"/>
    <property type="evidence" value="ECO:0007669"/>
    <property type="project" value="UniProtKB-KW"/>
</dbReference>
<dbReference type="GO" id="GO:0004707">
    <property type="term" value="F:MAP kinase activity"/>
    <property type="evidence" value="ECO:0007669"/>
    <property type="project" value="UniProtKB-EC"/>
</dbReference>
<dbReference type="GO" id="GO:0106310">
    <property type="term" value="F:protein serine kinase activity"/>
    <property type="evidence" value="ECO:0007669"/>
    <property type="project" value="RHEA"/>
</dbReference>
<dbReference type="GO" id="GO:0004674">
    <property type="term" value="F:protein serine/threonine kinase activity"/>
    <property type="evidence" value="ECO:0000318"/>
    <property type="project" value="GO_Central"/>
</dbReference>
<dbReference type="GO" id="GO:0034599">
    <property type="term" value="P:cellular response to oxidative stress"/>
    <property type="evidence" value="ECO:0000318"/>
    <property type="project" value="GO_Central"/>
</dbReference>
<dbReference type="GO" id="GO:0007231">
    <property type="term" value="P:osmosensory signaling pathway"/>
    <property type="evidence" value="ECO:0000318"/>
    <property type="project" value="GO_Central"/>
</dbReference>
<dbReference type="GO" id="GO:0051403">
    <property type="term" value="P:stress-activated MAPK cascade"/>
    <property type="evidence" value="ECO:0000318"/>
    <property type="project" value="GO_Central"/>
</dbReference>
<dbReference type="CDD" id="cd07856">
    <property type="entry name" value="STKc_Sty1_Hog1"/>
    <property type="match status" value="1"/>
</dbReference>
<dbReference type="FunFam" id="1.10.510.10:FF:000049">
    <property type="entry name" value="Mitogen-activated protein kinase"/>
    <property type="match status" value="1"/>
</dbReference>
<dbReference type="FunFam" id="3.30.200.20:FF:000050">
    <property type="entry name" value="Mitogen-activated protein kinase"/>
    <property type="match status" value="1"/>
</dbReference>
<dbReference type="Gene3D" id="3.30.200.20">
    <property type="entry name" value="Phosphorylase Kinase, domain 1"/>
    <property type="match status" value="1"/>
</dbReference>
<dbReference type="Gene3D" id="1.10.510.10">
    <property type="entry name" value="Transferase(Phosphotransferase) domain 1"/>
    <property type="match status" value="1"/>
</dbReference>
<dbReference type="InterPro" id="IPR011009">
    <property type="entry name" value="Kinase-like_dom_sf"/>
</dbReference>
<dbReference type="InterPro" id="IPR050117">
    <property type="entry name" value="MAP_kinase"/>
</dbReference>
<dbReference type="InterPro" id="IPR003527">
    <property type="entry name" value="MAP_kinase_CS"/>
</dbReference>
<dbReference type="InterPro" id="IPR008352">
    <property type="entry name" value="MAPK_p38-like"/>
</dbReference>
<dbReference type="InterPro" id="IPR038783">
    <property type="entry name" value="MAPK_Sty1/Hog1"/>
</dbReference>
<dbReference type="InterPro" id="IPR000719">
    <property type="entry name" value="Prot_kinase_dom"/>
</dbReference>
<dbReference type="InterPro" id="IPR017441">
    <property type="entry name" value="Protein_kinase_ATP_BS"/>
</dbReference>
<dbReference type="InterPro" id="IPR008271">
    <property type="entry name" value="Ser/Thr_kinase_AS"/>
</dbReference>
<dbReference type="PANTHER" id="PTHR24055">
    <property type="entry name" value="MITOGEN-ACTIVATED PROTEIN KINASE"/>
    <property type="match status" value="1"/>
</dbReference>
<dbReference type="Pfam" id="PF00069">
    <property type="entry name" value="Pkinase"/>
    <property type="match status" value="1"/>
</dbReference>
<dbReference type="PRINTS" id="PR01773">
    <property type="entry name" value="P38MAPKINASE"/>
</dbReference>
<dbReference type="SMART" id="SM00220">
    <property type="entry name" value="S_TKc"/>
    <property type="match status" value="1"/>
</dbReference>
<dbReference type="SUPFAM" id="SSF56112">
    <property type="entry name" value="Protein kinase-like (PK-like)"/>
    <property type="match status" value="1"/>
</dbReference>
<dbReference type="PROSITE" id="PS01351">
    <property type="entry name" value="MAPK"/>
    <property type="match status" value="1"/>
</dbReference>
<dbReference type="PROSITE" id="PS00107">
    <property type="entry name" value="PROTEIN_KINASE_ATP"/>
    <property type="match status" value="1"/>
</dbReference>
<dbReference type="PROSITE" id="PS50011">
    <property type="entry name" value="PROTEIN_KINASE_DOM"/>
    <property type="match status" value="1"/>
</dbReference>
<dbReference type="PROSITE" id="PS00108">
    <property type="entry name" value="PROTEIN_KINASE_ST"/>
    <property type="match status" value="1"/>
</dbReference>
<name>HOG1_NEUCR</name>
<gene>
    <name type="primary">hog-1</name>
    <name type="synonym">os-2</name>
    <name type="ORF">NCU07024</name>
</gene>
<accession>Q96TL5</accession>
<accession>Q7RVG0</accession>
<protein>
    <recommendedName>
        <fullName>Mitogen-activated protein kinase hog-1</fullName>
        <shortName>MAP kinase hog-1</shortName>
        <ecNumber evidence="2">2.7.11.24</ecNumber>
    </recommendedName>
</protein>
<keyword id="KW-0010">Activator</keyword>
<keyword id="KW-0067">ATP-binding</keyword>
<keyword id="KW-0963">Cytoplasm</keyword>
<keyword id="KW-0418">Kinase</keyword>
<keyword id="KW-0547">Nucleotide-binding</keyword>
<keyword id="KW-0539">Nucleus</keyword>
<keyword id="KW-0597">Phosphoprotein</keyword>
<keyword id="KW-1185">Reference proteome</keyword>
<keyword id="KW-0723">Serine/threonine-protein kinase</keyword>
<keyword id="KW-0804">Transcription</keyword>
<keyword id="KW-0805">Transcription regulation</keyword>
<keyword id="KW-0808">Transferase</keyword>
<comment type="function">
    <text evidence="6 8">Proline-directed serine/threonine-protein kinase involved in a signal transduction pathway that is activated by changes in the osmolarity of the extracellular environment. Controls osmotic regulation of transcription of target genes. Involved in ion flux-mediated turgor regulation.</text>
</comment>
<comment type="catalytic activity">
    <reaction evidence="2">
        <text>L-seryl-[protein] + ATP = O-phospho-L-seryl-[protein] + ADP + H(+)</text>
        <dbReference type="Rhea" id="RHEA:17989"/>
        <dbReference type="Rhea" id="RHEA-COMP:9863"/>
        <dbReference type="Rhea" id="RHEA-COMP:11604"/>
        <dbReference type="ChEBI" id="CHEBI:15378"/>
        <dbReference type="ChEBI" id="CHEBI:29999"/>
        <dbReference type="ChEBI" id="CHEBI:30616"/>
        <dbReference type="ChEBI" id="CHEBI:83421"/>
        <dbReference type="ChEBI" id="CHEBI:456216"/>
        <dbReference type="EC" id="2.7.11.24"/>
    </reaction>
    <physiologicalReaction direction="left-to-right" evidence="2">
        <dbReference type="Rhea" id="RHEA:17990"/>
    </physiologicalReaction>
</comment>
<comment type="catalytic activity">
    <reaction evidence="2">
        <text>L-threonyl-[protein] + ATP = O-phospho-L-threonyl-[protein] + ADP + H(+)</text>
        <dbReference type="Rhea" id="RHEA:46608"/>
        <dbReference type="Rhea" id="RHEA-COMP:11060"/>
        <dbReference type="Rhea" id="RHEA-COMP:11605"/>
        <dbReference type="ChEBI" id="CHEBI:15378"/>
        <dbReference type="ChEBI" id="CHEBI:30013"/>
        <dbReference type="ChEBI" id="CHEBI:30616"/>
        <dbReference type="ChEBI" id="CHEBI:61977"/>
        <dbReference type="ChEBI" id="CHEBI:456216"/>
        <dbReference type="EC" id="2.7.11.24"/>
    </reaction>
    <physiologicalReaction direction="left-to-right" evidence="2">
        <dbReference type="Rhea" id="RHEA:46609"/>
    </physiologicalReaction>
</comment>
<comment type="cofactor">
    <cofactor evidence="3">
        <name>Mg(2+)</name>
        <dbReference type="ChEBI" id="CHEBI:18420"/>
    </cofactor>
</comment>
<comment type="activity regulation">
    <text evidence="1">Activated by tyrosine and threonine phosphorylation.</text>
</comment>
<comment type="subcellular location">
    <subcellularLocation>
        <location evidence="1">Cytoplasm</location>
    </subcellularLocation>
    <subcellularLocation>
        <location evidence="1">Nucleus</location>
    </subcellularLocation>
</comment>
<comment type="domain">
    <text>The TXY motif contains the threonine and tyrosine residues whose phosphorylation activates the MAP kinases.</text>
</comment>
<comment type="PTM">
    <text evidence="1 7">Dually phosphorylated on Thr-171 and Tyr-173, which activates the enzyme (By similarity). Phosphorylation is induced by fungicides and osmotic stress.</text>
</comment>
<comment type="similarity">
    <text evidence="4">Belongs to the protein kinase superfamily. Ser/Thr protein kinase family. MAP kinase subfamily. HOG1 sub-subfamily.</text>
</comment>
<evidence type="ECO:0000250" key="1"/>
<evidence type="ECO:0000250" key="2">
    <source>
        <dbReference type="UniProtKB" id="P32485"/>
    </source>
</evidence>
<evidence type="ECO:0000250" key="3">
    <source>
        <dbReference type="UniProtKB" id="Q16539"/>
    </source>
</evidence>
<evidence type="ECO:0000255" key="4">
    <source>
        <dbReference type="PROSITE-ProRule" id="PRU00159"/>
    </source>
</evidence>
<evidence type="ECO:0000255" key="5">
    <source>
        <dbReference type="PROSITE-ProRule" id="PRU10027"/>
    </source>
</evidence>
<evidence type="ECO:0000269" key="6">
    <source>
    </source>
</evidence>
<evidence type="ECO:0000269" key="7">
    <source>
    </source>
</evidence>
<evidence type="ECO:0000269" key="8">
    <source>
    </source>
</evidence>
<feature type="chain" id="PRO_0000289698" description="Mitogen-activated protein kinase hog-1">
    <location>
        <begin position="1"/>
        <end position="358"/>
    </location>
</feature>
<feature type="domain" description="Protein kinase" evidence="4">
    <location>
        <begin position="20"/>
        <end position="299"/>
    </location>
</feature>
<feature type="short sequence motif" description="TXY">
    <location>
        <begin position="171"/>
        <end position="173"/>
    </location>
</feature>
<feature type="active site" description="Proton acceptor" evidence="4 5">
    <location>
        <position position="141"/>
    </location>
</feature>
<feature type="binding site" evidence="4">
    <location>
        <begin position="26"/>
        <end position="34"/>
    </location>
    <ligand>
        <name>ATP</name>
        <dbReference type="ChEBI" id="CHEBI:30616"/>
    </ligand>
</feature>
<feature type="binding site" evidence="4">
    <location>
        <position position="49"/>
    </location>
    <ligand>
        <name>ATP</name>
        <dbReference type="ChEBI" id="CHEBI:30616"/>
    </ligand>
</feature>
<feature type="modified residue" description="Phosphothreonine" evidence="1">
    <location>
        <position position="171"/>
    </location>
</feature>
<feature type="modified residue" description="Phosphotyrosine" evidence="1">
    <location>
        <position position="173"/>
    </location>
</feature>
<organism>
    <name type="scientific">Neurospora crassa (strain ATCC 24698 / 74-OR23-1A / CBS 708.71 / DSM 1257 / FGSC 987)</name>
    <dbReference type="NCBI Taxonomy" id="367110"/>
    <lineage>
        <taxon>Eukaryota</taxon>
        <taxon>Fungi</taxon>
        <taxon>Dikarya</taxon>
        <taxon>Ascomycota</taxon>
        <taxon>Pezizomycotina</taxon>
        <taxon>Sordariomycetes</taxon>
        <taxon>Sordariomycetidae</taxon>
        <taxon>Sordariales</taxon>
        <taxon>Sordariaceae</taxon>
        <taxon>Neurospora</taxon>
    </lineage>
</organism>
<proteinExistence type="evidence at protein level"/>
<reference key="1">
    <citation type="submission" date="2000-08" db="EMBL/GenBank/DDBJ databases">
        <title>The hyper-osmotic stress response pathway of Neurospora crassa is the target of phenylpyrrole fungicides.</title>
        <authorList>
            <person name="Zhang Y."/>
            <person name="Lamm R."/>
            <person name="Pillonel C."/>
            <person name="Xu J.-R."/>
            <person name="Lam S."/>
        </authorList>
    </citation>
    <scope>NUCLEOTIDE SEQUENCE [MRNA]</scope>
</reference>
<reference key="2">
    <citation type="journal article" date="2002" name="Appl. Environ. Microbiol.">
        <title>Osmoregulation and fungicide resistance: the Neurospora crassa os-2 gene encodes a HOG1 mitogen-activated protein kinase homologue.</title>
        <authorList>
            <person name="Zhang Y."/>
            <person name="Lamm R."/>
            <person name="Pillonel C."/>
            <person name="Lam S."/>
            <person name="Xu J.-R."/>
        </authorList>
    </citation>
    <scope>NUCLEOTIDE SEQUENCE [GENOMIC DNA]</scope>
    <scope>FUNCTION</scope>
</reference>
<reference key="3">
    <citation type="journal article" date="2003" name="Nature">
        <title>The genome sequence of the filamentous fungus Neurospora crassa.</title>
        <authorList>
            <person name="Galagan J.E."/>
            <person name="Calvo S.E."/>
            <person name="Borkovich K.A."/>
            <person name="Selker E.U."/>
            <person name="Read N.D."/>
            <person name="Jaffe D.B."/>
            <person name="FitzHugh W."/>
            <person name="Ma L.-J."/>
            <person name="Smirnov S."/>
            <person name="Purcell S."/>
            <person name="Rehman B."/>
            <person name="Elkins T."/>
            <person name="Engels R."/>
            <person name="Wang S."/>
            <person name="Nielsen C.B."/>
            <person name="Butler J."/>
            <person name="Endrizzi M."/>
            <person name="Qui D."/>
            <person name="Ianakiev P."/>
            <person name="Bell-Pedersen D."/>
            <person name="Nelson M.A."/>
            <person name="Werner-Washburne M."/>
            <person name="Selitrennikoff C.P."/>
            <person name="Kinsey J.A."/>
            <person name="Braun E.L."/>
            <person name="Zelter A."/>
            <person name="Schulte U."/>
            <person name="Kothe G.O."/>
            <person name="Jedd G."/>
            <person name="Mewes H.-W."/>
            <person name="Staben C."/>
            <person name="Marcotte E."/>
            <person name="Greenberg D."/>
            <person name="Roy A."/>
            <person name="Foley K."/>
            <person name="Naylor J."/>
            <person name="Stange-Thomann N."/>
            <person name="Barrett R."/>
            <person name="Gnerre S."/>
            <person name="Kamal M."/>
            <person name="Kamvysselis M."/>
            <person name="Mauceli E.W."/>
            <person name="Bielke C."/>
            <person name="Rudd S."/>
            <person name="Frishman D."/>
            <person name="Krystofova S."/>
            <person name="Rasmussen C."/>
            <person name="Metzenberg R.L."/>
            <person name="Perkins D.D."/>
            <person name="Kroken S."/>
            <person name="Cogoni C."/>
            <person name="Macino G."/>
            <person name="Catcheside D.E.A."/>
            <person name="Li W."/>
            <person name="Pratt R.J."/>
            <person name="Osmani S.A."/>
            <person name="DeSouza C.P.C."/>
            <person name="Glass N.L."/>
            <person name="Orbach M.J."/>
            <person name="Berglund J.A."/>
            <person name="Voelker R."/>
            <person name="Yarden O."/>
            <person name="Plamann M."/>
            <person name="Seiler S."/>
            <person name="Dunlap J.C."/>
            <person name="Radford A."/>
            <person name="Aramayo R."/>
            <person name="Natvig D.O."/>
            <person name="Alex L.A."/>
            <person name="Mannhaupt G."/>
            <person name="Ebbole D.J."/>
            <person name="Freitag M."/>
            <person name="Paulsen I."/>
            <person name="Sachs M.S."/>
            <person name="Lander E.S."/>
            <person name="Nusbaum C."/>
            <person name="Birren B.W."/>
        </authorList>
    </citation>
    <scope>NUCLEOTIDE SEQUENCE [LARGE SCALE GENOMIC DNA]</scope>
    <source>
        <strain>ATCC 24698 / 74-OR23-1A / CBS 708.71 / DSM 1257 / FGSC 987</strain>
    </source>
</reference>
<reference key="4">
    <citation type="journal article" date="2005" name="Eukaryot. Cell">
        <title>Group III histidine kinase is a positive regulator of Hog1-type mitogen-activated protein kinase in filamentous fungi.</title>
        <authorList>
            <person name="Yoshimi A."/>
            <person name="Kojima K."/>
            <person name="Takano Y."/>
            <person name="Tanaka C."/>
        </authorList>
    </citation>
    <scope>PHOSPHORYLATION</scope>
</reference>
<reference key="5">
    <citation type="journal article" date="2006" name="Eukaryot. Cell">
        <title>Role of a mitogen-activated protein kinase cascade in ion flux-mediated turgor regulation in fungi.</title>
        <authorList>
            <person name="Lew R.R."/>
            <person name="Levina N.N."/>
            <person name="Shabala L."/>
            <person name="Anderca M.I."/>
            <person name="Shabala S.N."/>
        </authorList>
    </citation>
    <scope>FUNCTION</scope>
</reference>